<dbReference type="EC" id="2.3.3.16"/>
<dbReference type="EMBL" id="Z30423">
    <property type="protein sequence ID" value="CAA83004.1"/>
    <property type="molecule type" value="Genomic_DNA"/>
</dbReference>
<dbReference type="PIR" id="S42370">
    <property type="entry name" value="S42370"/>
</dbReference>
<dbReference type="RefSeq" id="NP_499264.1">
    <property type="nucleotide sequence ID" value="NM_066863.9"/>
</dbReference>
<dbReference type="SMR" id="P34575"/>
<dbReference type="BioGRID" id="41631">
    <property type="interactions" value="23"/>
</dbReference>
<dbReference type="FunCoup" id="P34575">
    <property type="interactions" value="2112"/>
</dbReference>
<dbReference type="STRING" id="6239.T20G5.2.1"/>
<dbReference type="PaxDb" id="6239-T20G5.2"/>
<dbReference type="PeptideAtlas" id="P34575"/>
<dbReference type="EnsemblMetazoa" id="T20G5.2.1">
    <property type="protein sequence ID" value="T20G5.2.1"/>
    <property type="gene ID" value="WBGene00000833"/>
</dbReference>
<dbReference type="GeneID" id="176437"/>
<dbReference type="KEGG" id="cel:CELE_T20G5.2"/>
<dbReference type="UCSC" id="T20G5.2.1">
    <property type="organism name" value="c. elegans"/>
</dbReference>
<dbReference type="AGR" id="WB:WBGene00000833"/>
<dbReference type="CTD" id="176437"/>
<dbReference type="WormBase" id="T20G5.2">
    <property type="protein sequence ID" value="CE00513"/>
    <property type="gene ID" value="WBGene00000833"/>
    <property type="gene designation" value="cts-1"/>
</dbReference>
<dbReference type="eggNOG" id="KOG2617">
    <property type="taxonomic scope" value="Eukaryota"/>
</dbReference>
<dbReference type="GeneTree" id="ENSGT00390000006813"/>
<dbReference type="HOGENOM" id="CLU_022049_2_1_1"/>
<dbReference type="InParanoid" id="P34575"/>
<dbReference type="OMA" id="VLEWLFK"/>
<dbReference type="OrthoDB" id="8017587at2759"/>
<dbReference type="PhylomeDB" id="P34575"/>
<dbReference type="Reactome" id="R-CEL-71403">
    <property type="pathway name" value="Citric acid cycle (TCA cycle)"/>
</dbReference>
<dbReference type="Reactome" id="R-CEL-9837999">
    <property type="pathway name" value="Mitochondrial protein degradation"/>
</dbReference>
<dbReference type="UniPathway" id="UPA00223">
    <property type="reaction ID" value="UER00717"/>
</dbReference>
<dbReference type="PRO" id="PR:P34575"/>
<dbReference type="Proteomes" id="UP000001940">
    <property type="component" value="Chromosome III"/>
</dbReference>
<dbReference type="Bgee" id="WBGene00000833">
    <property type="expression patterns" value="Expressed in adult organism and 4 other cell types or tissues"/>
</dbReference>
<dbReference type="GO" id="GO:0005759">
    <property type="term" value="C:mitochondrial matrix"/>
    <property type="evidence" value="ECO:0000250"/>
    <property type="project" value="UniProtKB"/>
</dbReference>
<dbReference type="GO" id="GO:0005739">
    <property type="term" value="C:mitochondrion"/>
    <property type="evidence" value="ECO:0007005"/>
    <property type="project" value="WormBase"/>
</dbReference>
<dbReference type="GO" id="GO:0004108">
    <property type="term" value="F:citrate (Si)-synthase activity"/>
    <property type="evidence" value="ECO:0000250"/>
    <property type="project" value="UniProtKB"/>
</dbReference>
<dbReference type="GO" id="GO:0005975">
    <property type="term" value="P:carbohydrate metabolic process"/>
    <property type="evidence" value="ECO:0000250"/>
    <property type="project" value="UniProtKB"/>
</dbReference>
<dbReference type="GO" id="GO:0006101">
    <property type="term" value="P:citrate metabolic process"/>
    <property type="evidence" value="ECO:0007669"/>
    <property type="project" value="InterPro"/>
</dbReference>
<dbReference type="GO" id="GO:0006099">
    <property type="term" value="P:tricarboxylic acid cycle"/>
    <property type="evidence" value="ECO:0000318"/>
    <property type="project" value="GO_Central"/>
</dbReference>
<dbReference type="CDD" id="cd06105">
    <property type="entry name" value="ScCit1-2_like"/>
    <property type="match status" value="1"/>
</dbReference>
<dbReference type="FunFam" id="1.10.230.10:FF:000001">
    <property type="entry name" value="Citrate synthase"/>
    <property type="match status" value="1"/>
</dbReference>
<dbReference type="FunFam" id="1.10.580.10:FF:000001">
    <property type="entry name" value="Citrate synthase"/>
    <property type="match status" value="1"/>
</dbReference>
<dbReference type="Gene3D" id="1.10.580.10">
    <property type="entry name" value="Citrate Synthase, domain 1"/>
    <property type="match status" value="1"/>
</dbReference>
<dbReference type="Gene3D" id="1.10.230.10">
    <property type="entry name" value="Cytochrome P450-Terp, domain 2"/>
    <property type="match status" value="1"/>
</dbReference>
<dbReference type="InterPro" id="IPR016142">
    <property type="entry name" value="Citrate_synth-like_lrg_a-sub"/>
</dbReference>
<dbReference type="InterPro" id="IPR016143">
    <property type="entry name" value="Citrate_synth-like_sm_a-sub"/>
</dbReference>
<dbReference type="InterPro" id="IPR002020">
    <property type="entry name" value="Citrate_synthase"/>
</dbReference>
<dbReference type="InterPro" id="IPR019810">
    <property type="entry name" value="Citrate_synthase_AS"/>
</dbReference>
<dbReference type="InterPro" id="IPR010109">
    <property type="entry name" value="Citrate_synthase_euk"/>
</dbReference>
<dbReference type="InterPro" id="IPR036969">
    <property type="entry name" value="Citrate_synthase_sf"/>
</dbReference>
<dbReference type="NCBIfam" id="TIGR01793">
    <property type="entry name" value="cit_synth_euk"/>
    <property type="match status" value="1"/>
</dbReference>
<dbReference type="NCBIfam" id="NF007128">
    <property type="entry name" value="PRK09569.1"/>
    <property type="match status" value="1"/>
</dbReference>
<dbReference type="PANTHER" id="PTHR11739">
    <property type="entry name" value="CITRATE SYNTHASE"/>
    <property type="match status" value="1"/>
</dbReference>
<dbReference type="PANTHER" id="PTHR11739:SF8">
    <property type="entry name" value="CITRATE SYNTHASE, MITOCHONDRIAL"/>
    <property type="match status" value="1"/>
</dbReference>
<dbReference type="Pfam" id="PF00285">
    <property type="entry name" value="Citrate_synt"/>
    <property type="match status" value="1"/>
</dbReference>
<dbReference type="PRINTS" id="PR00143">
    <property type="entry name" value="CITRTSNTHASE"/>
</dbReference>
<dbReference type="SUPFAM" id="SSF48256">
    <property type="entry name" value="Citrate synthase"/>
    <property type="match status" value="1"/>
</dbReference>
<dbReference type="PROSITE" id="PS00480">
    <property type="entry name" value="CITRATE_SYNTHASE"/>
    <property type="match status" value="1"/>
</dbReference>
<evidence type="ECO:0000250" key="1"/>
<evidence type="ECO:0000255" key="2"/>
<evidence type="ECO:0000255" key="3">
    <source>
        <dbReference type="PROSITE-ProRule" id="PRU10117"/>
    </source>
</evidence>
<evidence type="ECO:0000305" key="4"/>
<accession>P34575</accession>
<comment type="catalytic activity">
    <reaction evidence="3">
        <text>oxaloacetate + acetyl-CoA + H2O = citrate + CoA + H(+)</text>
        <dbReference type="Rhea" id="RHEA:16845"/>
        <dbReference type="ChEBI" id="CHEBI:15377"/>
        <dbReference type="ChEBI" id="CHEBI:15378"/>
        <dbReference type="ChEBI" id="CHEBI:16452"/>
        <dbReference type="ChEBI" id="CHEBI:16947"/>
        <dbReference type="ChEBI" id="CHEBI:57287"/>
        <dbReference type="ChEBI" id="CHEBI:57288"/>
        <dbReference type="EC" id="2.3.3.16"/>
    </reaction>
</comment>
<comment type="pathway">
    <text>Carbohydrate metabolism; tricarboxylic acid cycle; isocitrate from oxaloacetate: step 1/2.</text>
</comment>
<comment type="subunit">
    <text evidence="1">Homodimer.</text>
</comment>
<comment type="subcellular location">
    <subcellularLocation>
        <location evidence="1">Mitochondrion matrix</location>
    </subcellularLocation>
</comment>
<comment type="miscellaneous">
    <text>Citrate synthase is found in nearly all cells capable of oxidative metabolism.</text>
</comment>
<comment type="similarity">
    <text evidence="4">Belongs to the citrate synthase family.</text>
</comment>
<sequence>MSLSGMAIRRLITKGVIPVCQVAPLSTSAEGSTNLKEVLSKKIPAHNAKVKSFRTEHGSTVVQNVNIDMIYGGMRSMKGMVTETSVLDPEEGIRFRGYSIPECQKLLPKAKGGEEPLPEAIWWLLCTGDVPSEAQTAAITKEWNARADLPTHVVRMLDNFPDNLHPMAQFIAAIAALNNESKFAGAYARGVAKASYWEYAYEDSMDLLAKLPTVAAIIYRNLYRDGSAVSVIDPKKDWSANFSSMLGYDDPLFAELMRLYLVIHSDHEGGNVSAHTSHLVGSALSDPYLSFSAAMAGLAGPLHGLANQEVLVFLNKIVGEIGFNYTEEQLKEWVWKHLKSGQVVPGYGHAVLRKTDPRYECQREFALKHLPNDDLFKLVSTLYKITPGILLEQGKAKNPWPNVDSHSGVLLQYFGMTEMSFYTVLFGVSRALGCLSQLIWARGMGLPLERPKSHSTDGLIKLALAAKK</sequence>
<proteinExistence type="inferred from homology"/>
<protein>
    <recommendedName>
        <fullName>Probable citrate synthase, mitochondrial</fullName>
        <ecNumber>2.3.3.16</ecNumber>
    </recommendedName>
</protein>
<feature type="transit peptide" description="Mitochondrion" evidence="2">
    <location>
        <begin position="1"/>
        <end status="unknown"/>
    </location>
</feature>
<feature type="chain" id="PRO_0000005470" description="Probable citrate synthase, mitochondrial">
    <location>
        <begin status="unknown"/>
        <end position="468"/>
    </location>
</feature>
<feature type="active site" evidence="3">
    <location>
        <position position="303"/>
    </location>
</feature>
<feature type="active site" evidence="3">
    <location>
        <position position="349"/>
    </location>
</feature>
<feature type="active site" evidence="3">
    <location>
        <position position="404"/>
    </location>
</feature>
<organism>
    <name type="scientific">Caenorhabditis elegans</name>
    <dbReference type="NCBI Taxonomy" id="6239"/>
    <lineage>
        <taxon>Eukaryota</taxon>
        <taxon>Metazoa</taxon>
        <taxon>Ecdysozoa</taxon>
        <taxon>Nematoda</taxon>
        <taxon>Chromadorea</taxon>
        <taxon>Rhabditida</taxon>
        <taxon>Rhabditina</taxon>
        <taxon>Rhabditomorpha</taxon>
        <taxon>Rhabditoidea</taxon>
        <taxon>Rhabditidae</taxon>
        <taxon>Peloderinae</taxon>
        <taxon>Caenorhabditis</taxon>
    </lineage>
</organism>
<name>CISY_CAEEL</name>
<keyword id="KW-0496">Mitochondrion</keyword>
<keyword id="KW-1185">Reference proteome</keyword>
<keyword id="KW-0808">Transferase</keyword>
<keyword id="KW-0809">Transit peptide</keyword>
<keyword id="KW-0816">Tricarboxylic acid cycle</keyword>
<reference key="1">
    <citation type="journal article" date="1998" name="Science">
        <title>Genome sequence of the nematode C. elegans: a platform for investigating biology.</title>
        <authorList>
            <consortium name="The C. elegans sequencing consortium"/>
        </authorList>
    </citation>
    <scope>NUCLEOTIDE SEQUENCE [LARGE SCALE GENOMIC DNA]</scope>
    <source>
        <strain>Bristol N2</strain>
    </source>
</reference>
<gene>
    <name type="primary">cts-1</name>
    <name type="ORF">T20G5.2</name>
</gene>